<feature type="chain" id="PRO_0000398804" description="Progestin and adipoQ receptor-like protein 1">
    <location>
        <begin position="1"/>
        <end position="423"/>
    </location>
</feature>
<feature type="topological domain" description="Cytoplasmic" evidence="2">
    <location>
        <begin position="1"/>
        <end position="201"/>
    </location>
</feature>
<feature type="transmembrane region" description="Helical; Name=1" evidence="2">
    <location>
        <begin position="202"/>
        <end position="222"/>
    </location>
</feature>
<feature type="topological domain" description="Extracellular" evidence="2">
    <location>
        <begin position="223"/>
        <end position="234"/>
    </location>
</feature>
<feature type="transmembrane region" description="Helical; Name=2" evidence="2">
    <location>
        <begin position="235"/>
        <end position="252"/>
    </location>
</feature>
<feature type="topological domain" description="Cytoplasmic" evidence="2">
    <location>
        <begin position="253"/>
        <end position="288"/>
    </location>
</feature>
<feature type="transmembrane region" description="Helical; Name=3" evidence="2">
    <location>
        <begin position="289"/>
        <end position="309"/>
    </location>
</feature>
<feature type="topological domain" description="Extracellular" evidence="2">
    <location>
        <begin position="310"/>
        <end position="320"/>
    </location>
</feature>
<feature type="transmembrane region" description="Helical; Name=4" evidence="2">
    <location>
        <begin position="321"/>
        <end position="341"/>
    </location>
</feature>
<feature type="topological domain" description="Cytoplasmic" evidence="2">
    <location>
        <begin position="342"/>
        <end position="351"/>
    </location>
</feature>
<feature type="transmembrane region" description="Helical; Name=5" evidence="2">
    <location>
        <begin position="352"/>
        <end position="372"/>
    </location>
</feature>
<feature type="topological domain" description="Extracellular" evidence="2">
    <location>
        <begin position="373"/>
        <end position="392"/>
    </location>
</feature>
<feature type="transmembrane region" description="Helical; Name=6" evidence="2">
    <location>
        <begin position="393"/>
        <end position="413"/>
    </location>
</feature>
<feature type="topological domain" description="Cytoplasmic" evidence="2">
    <location>
        <begin position="414"/>
        <end position="423"/>
    </location>
</feature>
<feature type="region of interest" description="Disordered" evidence="3">
    <location>
        <begin position="54"/>
        <end position="140"/>
    </location>
</feature>
<feature type="compositionally biased region" description="Acidic residues" evidence="3">
    <location>
        <begin position="60"/>
        <end position="69"/>
    </location>
</feature>
<feature type="compositionally biased region" description="Basic residues" evidence="3">
    <location>
        <begin position="104"/>
        <end position="114"/>
    </location>
</feature>
<name>ADRL_CAEBR</name>
<reference evidence="4" key="1">
    <citation type="journal article" date="2003" name="PLoS Biol.">
        <title>The genome sequence of Caenorhabditis briggsae: a platform for comparative genomics.</title>
        <authorList>
            <person name="Stein L.D."/>
            <person name="Bao Z."/>
            <person name="Blasiar D."/>
            <person name="Blumenthal T."/>
            <person name="Brent M.R."/>
            <person name="Chen N."/>
            <person name="Chinwalla A."/>
            <person name="Clarke L."/>
            <person name="Clee C."/>
            <person name="Coghlan A."/>
            <person name="Coulson A."/>
            <person name="D'Eustachio P."/>
            <person name="Fitch D.H.A."/>
            <person name="Fulton L.A."/>
            <person name="Fulton R.E."/>
            <person name="Griffiths-Jones S."/>
            <person name="Harris T.W."/>
            <person name="Hillier L.W."/>
            <person name="Kamath R."/>
            <person name="Kuwabara P.E."/>
            <person name="Mardis E.R."/>
            <person name="Marra M.A."/>
            <person name="Miner T.L."/>
            <person name="Minx P."/>
            <person name="Mullikin J.C."/>
            <person name="Plumb R.W."/>
            <person name="Rogers J."/>
            <person name="Schein J.E."/>
            <person name="Sohrmann M."/>
            <person name="Spieth J."/>
            <person name="Stajich J.E."/>
            <person name="Wei C."/>
            <person name="Willey D."/>
            <person name="Wilson R.K."/>
            <person name="Durbin R.M."/>
            <person name="Waterston R.H."/>
        </authorList>
    </citation>
    <scope>NUCLEOTIDE SEQUENCE [LARGE SCALE GENOMIC DNA]</scope>
    <source>
        <strain>AF16</strain>
    </source>
</reference>
<gene>
    <name evidence="5" type="primary">paqr-1</name>
    <name type="ORF">CBG05420</name>
</gene>
<organism>
    <name type="scientific">Caenorhabditis briggsae</name>
    <dbReference type="NCBI Taxonomy" id="6238"/>
    <lineage>
        <taxon>Eukaryota</taxon>
        <taxon>Metazoa</taxon>
        <taxon>Ecdysozoa</taxon>
        <taxon>Nematoda</taxon>
        <taxon>Chromadorea</taxon>
        <taxon>Rhabditida</taxon>
        <taxon>Rhabditina</taxon>
        <taxon>Rhabditomorpha</taxon>
        <taxon>Rhabditoidea</taxon>
        <taxon>Rhabditidae</taxon>
        <taxon>Peloderinae</taxon>
        <taxon>Caenorhabditis</taxon>
    </lineage>
</organism>
<accession>A8WZU4</accession>
<dbReference type="EMBL" id="HE601369">
    <property type="protein sequence ID" value="CAP25904.2"/>
    <property type="molecule type" value="Genomic_DNA"/>
</dbReference>
<dbReference type="SMR" id="A8WZU4"/>
<dbReference type="FunCoup" id="A8WZU4">
    <property type="interactions" value="2330"/>
</dbReference>
<dbReference type="STRING" id="6238.A8WZU4"/>
<dbReference type="WormBase" id="CBG05420">
    <property type="protein sequence ID" value="CBP01389"/>
    <property type="gene ID" value="WBGene00027874"/>
    <property type="gene designation" value="Cbr-paqr-1"/>
</dbReference>
<dbReference type="eggNOG" id="KOG0748">
    <property type="taxonomic scope" value="Eukaryota"/>
</dbReference>
<dbReference type="HOGENOM" id="CLU_023075_1_0_1"/>
<dbReference type="InParanoid" id="A8WZU4"/>
<dbReference type="OMA" id="CPMESDA"/>
<dbReference type="Proteomes" id="UP000008549">
    <property type="component" value="Unassembled WGS sequence"/>
</dbReference>
<dbReference type="GO" id="GO:0005886">
    <property type="term" value="C:plasma membrane"/>
    <property type="evidence" value="ECO:0000318"/>
    <property type="project" value="GO_Central"/>
</dbReference>
<dbReference type="GO" id="GO:0038023">
    <property type="term" value="F:signaling receptor activity"/>
    <property type="evidence" value="ECO:0000318"/>
    <property type="project" value="GO_Central"/>
</dbReference>
<dbReference type="GO" id="GO:0033211">
    <property type="term" value="P:adiponectin-activated signaling pathway"/>
    <property type="evidence" value="ECO:0000318"/>
    <property type="project" value="GO_Central"/>
</dbReference>
<dbReference type="GO" id="GO:0006631">
    <property type="term" value="P:fatty acid metabolic process"/>
    <property type="evidence" value="ECO:0007669"/>
    <property type="project" value="UniProtKB-KW"/>
</dbReference>
<dbReference type="InterPro" id="IPR004254">
    <property type="entry name" value="AdipoR/HlyIII-related"/>
</dbReference>
<dbReference type="InterPro" id="IPR001610">
    <property type="entry name" value="PAC"/>
</dbReference>
<dbReference type="PANTHER" id="PTHR20855">
    <property type="entry name" value="ADIPOR/PROGESTIN RECEPTOR-RELATED"/>
    <property type="match status" value="1"/>
</dbReference>
<dbReference type="PANTHER" id="PTHR20855:SF127">
    <property type="entry name" value="PROGESTIN AND ADIPOQ RECEPTOR-LIKE PROTEIN 1"/>
    <property type="match status" value="1"/>
</dbReference>
<dbReference type="Pfam" id="PF03006">
    <property type="entry name" value="HlyIII"/>
    <property type="match status" value="2"/>
</dbReference>
<dbReference type="SMART" id="SM00086">
    <property type="entry name" value="PAC"/>
    <property type="match status" value="1"/>
</dbReference>
<sequence>MDPDEVNQALGHYLNDSESGELVVEDSTTVQVTNPEARKTGDKIEVYYSRKTTVVSPTNSDDEEGEFCSDSELLPAQGGHRSRATSFAGRVRAGSDDEMNPKHTVLRYRRKKGGQWREVNAQGTPDKRKDDEDELEVDVKEDRSEQTGIVTKTYEARWKVLKYEHLPEWLQDNEFLRHGHRPPLPSFAECFKSIWSLHTETGNIWTHLIGCVAFFLLACWFLTRPDNHIQFQEKVVFSFFFAGAVSVSDSRSPSTPSRVIRSTSSRYSANSTIWESRCSLSARLFQPKITYIAMVCVLGIGAIVVSLWDKFSESKYRPVRAAVFVGMGCSGVIPTIHYIITDGVHSLFADNSFHWLLLMAFLYLLGAALYATRTPERFFPGKCDIWFQSHQLFHTCVVIAAFVHYYGISEMAFARLNEQCPVR</sequence>
<comment type="function">
    <text evidence="1">Probable receptor, which may be involved in metabolic pathways that regulate lipid metabolism such as fatty acid oxidation.</text>
</comment>
<comment type="subcellular location">
    <subcellularLocation>
        <location evidence="2">Membrane</location>
        <topology evidence="2">Multi-pass membrane protein</topology>
    </subcellularLocation>
</comment>
<comment type="similarity">
    <text evidence="2">Belongs to the ADIPOR family.</text>
</comment>
<keyword id="KW-0276">Fatty acid metabolism</keyword>
<keyword id="KW-0443">Lipid metabolism</keyword>
<keyword id="KW-0472">Membrane</keyword>
<keyword id="KW-0675">Receptor</keyword>
<keyword id="KW-1185">Reference proteome</keyword>
<keyword id="KW-0812">Transmembrane</keyword>
<keyword id="KW-1133">Transmembrane helix</keyword>
<evidence type="ECO:0000250" key="1">
    <source>
        <dbReference type="UniProtKB" id="Q94177"/>
    </source>
</evidence>
<evidence type="ECO:0000255" key="2"/>
<evidence type="ECO:0000256" key="3">
    <source>
        <dbReference type="SAM" id="MobiDB-lite"/>
    </source>
</evidence>
<evidence type="ECO:0000312" key="4">
    <source>
        <dbReference type="EMBL" id="CAP25904.2"/>
    </source>
</evidence>
<evidence type="ECO:0000312" key="5">
    <source>
        <dbReference type="WormBase" id="CBG05420"/>
    </source>
</evidence>
<proteinExistence type="inferred from homology"/>
<protein>
    <recommendedName>
        <fullName>Progestin and adipoQ receptor-like protein 1</fullName>
    </recommendedName>
</protein>